<keyword id="KW-0002">3D-structure</keyword>
<keyword id="KW-0903">Direct protein sequencing</keyword>
<keyword id="KW-1015">Disulfide bond</keyword>
<keyword id="KW-0256">Endoplasmic reticulum</keyword>
<keyword id="KW-0931">ER-Golgi transport</keyword>
<keyword id="KW-0333">Golgi apparatus</keyword>
<keyword id="KW-0430">Lectin</keyword>
<keyword id="KW-0472">Membrane</keyword>
<keyword id="KW-0479">Metal-binding</keyword>
<keyword id="KW-0597">Phosphoprotein</keyword>
<keyword id="KW-0653">Protein transport</keyword>
<keyword id="KW-1267">Proteomics identification</keyword>
<keyword id="KW-1185">Reference proteome</keyword>
<keyword id="KW-0732">Signal</keyword>
<keyword id="KW-0812">Transmembrane</keyword>
<keyword id="KW-1133">Transmembrane helix</keyword>
<keyword id="KW-0813">Transport</keyword>
<sequence>MAGSRQRGLRARVRPLFCALLLSLGRFVRGDGVGGDPAVALPHRRFEYKYSFKGPHLVQSDGTVPFWAHAGNAIPSSDQIRVAPSLKSQRGSVWTKTKAAFENWEVEVTFRVTGRGRIGADGLAIWYAENQGLEGPVFGSADLWNGVGIFFDSFDNDGKKNNPAIVIIGNNGQIHYDHQNDGASQALASCQRDFRNKPYPVRAKITYYQNTLTVMINNGFTPDKNDYEFCAKVENMIIPAQGHFGISAATGGLADDHDVLSFLTFQLTEPGKEPPTPDKEISEKEKEKYQEEFEHFQQELDKKKEEFQKGHPDLQGQPAEEIFESVGDRELRQVFEGQNRIHLEIKQLNRQLDMILDEQRRYVSSLTEEISKRGAGMPGQHGQITQQELDTVVKTQHEILRQVNEMKNSMSETVRLVSGMQHPGSAGGVYETTQHFIDIKEHLHIVKRDIDNLVQRNMPSNEKPKCPELPPFPSCLSTVHFIIFVVVQTVLFIGYIMYRSQQEAAAKKFF</sequence>
<gene>
    <name type="primary">LMAN1</name>
    <name type="synonym">ERGIC53</name>
    <name type="synonym">F5F8D</name>
</gene>
<evidence type="ECO:0000255" key="1"/>
<evidence type="ECO:0000255" key="2">
    <source>
        <dbReference type="PROSITE-ProRule" id="PRU00658"/>
    </source>
</evidence>
<evidence type="ECO:0000269" key="3">
    <source>
    </source>
</evidence>
<evidence type="ECO:0000269" key="4">
    <source>
    </source>
</evidence>
<evidence type="ECO:0000269" key="5">
    <source>
    </source>
</evidence>
<evidence type="ECO:0000269" key="6">
    <source>
    </source>
</evidence>
<evidence type="ECO:0000269" key="7">
    <source>
    </source>
</evidence>
<evidence type="ECO:0000269" key="8">
    <source>
    </source>
</evidence>
<evidence type="ECO:0000269" key="9">
    <source>
    </source>
</evidence>
<evidence type="ECO:0000269" key="10">
    <source>
    </source>
</evidence>
<evidence type="ECO:0000269" key="11">
    <source>
    </source>
</evidence>
<evidence type="ECO:0000269" key="12">
    <source>
    </source>
</evidence>
<evidence type="ECO:0000269" key="13">
    <source>
    </source>
</evidence>
<evidence type="ECO:0000269" key="14">
    <source>
    </source>
</evidence>
<evidence type="ECO:0000269" key="15">
    <source>
    </source>
</evidence>
<evidence type="ECO:0000269" key="16">
    <source>
    </source>
</evidence>
<evidence type="ECO:0000269" key="17">
    <source>
    </source>
</evidence>
<evidence type="ECO:0000269" key="18">
    <source>
    </source>
</evidence>
<evidence type="ECO:0000305" key="19"/>
<evidence type="ECO:0007744" key="20">
    <source>
    </source>
</evidence>
<evidence type="ECO:0007744" key="21">
    <source>
    </source>
</evidence>
<evidence type="ECO:0007829" key="22">
    <source>
        <dbReference type="PDB" id="3A4U"/>
    </source>
</evidence>
<evidence type="ECO:0007829" key="23">
    <source>
        <dbReference type="PDB" id="3WHT"/>
    </source>
</evidence>
<evidence type="ECO:0007829" key="24">
    <source>
        <dbReference type="PDB" id="3WHU"/>
    </source>
</evidence>
<evidence type="ECO:0007829" key="25">
    <source>
        <dbReference type="PDB" id="4GKY"/>
    </source>
</evidence>
<evidence type="ECO:0007829" key="26">
    <source>
        <dbReference type="PDB" id="4YGB"/>
    </source>
</evidence>
<evidence type="ECO:0007829" key="27">
    <source>
        <dbReference type="PDB" id="8JP4"/>
    </source>
</evidence>
<evidence type="ECO:0007829" key="28">
    <source>
        <dbReference type="PDB" id="8JP5"/>
    </source>
</evidence>
<evidence type="ECO:0007829" key="29">
    <source>
        <dbReference type="PDB" id="8JP9"/>
    </source>
</evidence>
<accession>P49257</accession>
<accession>Q12895</accession>
<accession>Q8N5I7</accession>
<accession>Q9UQG1</accession>
<accession>Q9UQG2</accession>
<accession>Q9UQG3</accession>
<accession>Q9UQG4</accession>
<accession>Q9UQG5</accession>
<accession>Q9UQG6</accession>
<accession>Q9UQG7</accession>
<accession>Q9UQG8</accession>
<accession>Q9UQG9</accession>
<accession>Q9UQH0</accession>
<accession>Q9UQH1</accession>
<accession>Q9UQH2</accession>
<proteinExistence type="evidence at protein level"/>
<dbReference type="EMBL" id="X71661">
    <property type="protein sequence ID" value="CAA50653.1"/>
    <property type="molecule type" value="mRNA"/>
</dbReference>
<dbReference type="EMBL" id="U09716">
    <property type="protein sequence ID" value="AAA95960.1"/>
    <property type="molecule type" value="mRNA"/>
</dbReference>
<dbReference type="EMBL" id="AF081866">
    <property type="protein sequence ID" value="AAD32479.1"/>
    <property type="molecule type" value="Genomic_DNA"/>
</dbReference>
<dbReference type="EMBL" id="AF081865">
    <property type="protein sequence ID" value="AAD32479.1"/>
    <property type="status" value="JOINED"/>
    <property type="molecule type" value="Genomic_DNA"/>
</dbReference>
<dbReference type="EMBL" id="AF081867">
    <property type="protein sequence ID" value="AAD32480.1"/>
    <property type="molecule type" value="Genomic_DNA"/>
</dbReference>
<dbReference type="EMBL" id="AF081869">
    <property type="protein sequence ID" value="AAD32481.1"/>
    <property type="molecule type" value="Genomic_DNA"/>
</dbReference>
<dbReference type="EMBL" id="AF081868">
    <property type="protein sequence ID" value="AAD32481.1"/>
    <property type="status" value="JOINED"/>
    <property type="molecule type" value="Genomic_DNA"/>
</dbReference>
<dbReference type="EMBL" id="AF081871">
    <property type="protein sequence ID" value="AAD32482.1"/>
    <property type="molecule type" value="Genomic_DNA"/>
</dbReference>
<dbReference type="EMBL" id="AF081870">
    <property type="protein sequence ID" value="AAD32482.1"/>
    <property type="status" value="JOINED"/>
    <property type="molecule type" value="Genomic_DNA"/>
</dbReference>
<dbReference type="EMBL" id="AF081873">
    <property type="protein sequence ID" value="AAD32483.1"/>
    <property type="molecule type" value="Genomic_DNA"/>
</dbReference>
<dbReference type="EMBL" id="AF081872">
    <property type="protein sequence ID" value="AAD32483.1"/>
    <property type="status" value="JOINED"/>
    <property type="molecule type" value="Genomic_DNA"/>
</dbReference>
<dbReference type="EMBL" id="AF081875">
    <property type="protein sequence ID" value="AAD32484.1"/>
    <property type="molecule type" value="Genomic_DNA"/>
</dbReference>
<dbReference type="EMBL" id="AF081874">
    <property type="protein sequence ID" value="AAD32484.1"/>
    <property type="status" value="JOINED"/>
    <property type="molecule type" value="Genomic_DNA"/>
</dbReference>
<dbReference type="EMBL" id="AF081877">
    <property type="protein sequence ID" value="AAD32485.1"/>
    <property type="molecule type" value="Genomic_DNA"/>
</dbReference>
<dbReference type="EMBL" id="AF081876">
    <property type="protein sequence ID" value="AAD32485.1"/>
    <property type="status" value="JOINED"/>
    <property type="molecule type" value="Genomic_DNA"/>
</dbReference>
<dbReference type="EMBL" id="AF081879">
    <property type="protein sequence ID" value="AAD32486.1"/>
    <property type="molecule type" value="Genomic_DNA"/>
</dbReference>
<dbReference type="EMBL" id="AF081878">
    <property type="protein sequence ID" value="AAD32486.1"/>
    <property type="status" value="JOINED"/>
    <property type="molecule type" value="Genomic_DNA"/>
</dbReference>
<dbReference type="EMBL" id="AF081880">
    <property type="protein sequence ID" value="AAD32487.1"/>
    <property type="molecule type" value="Genomic_DNA"/>
</dbReference>
<dbReference type="EMBL" id="AF081882">
    <property type="protein sequence ID" value="AAD32488.1"/>
    <property type="molecule type" value="Genomic_DNA"/>
</dbReference>
<dbReference type="EMBL" id="AF081881">
    <property type="protein sequence ID" value="AAD32488.1"/>
    <property type="status" value="JOINED"/>
    <property type="molecule type" value="Genomic_DNA"/>
</dbReference>
<dbReference type="EMBL" id="AF081884">
    <property type="protein sequence ID" value="AAD32489.1"/>
    <property type="molecule type" value="Genomic_DNA"/>
</dbReference>
<dbReference type="EMBL" id="AF081883">
    <property type="protein sequence ID" value="AAD32489.1"/>
    <property type="status" value="JOINED"/>
    <property type="molecule type" value="Genomic_DNA"/>
</dbReference>
<dbReference type="EMBL" id="AF081885">
    <property type="protein sequence ID" value="AAD32490.1"/>
    <property type="molecule type" value="Genomic_DNA"/>
</dbReference>
<dbReference type="EMBL" id="BC032330">
    <property type="protein sequence ID" value="AAH32330.1"/>
    <property type="molecule type" value="mRNA"/>
</dbReference>
<dbReference type="CCDS" id="CCDS11974.1"/>
<dbReference type="PIR" id="S42626">
    <property type="entry name" value="S42626"/>
</dbReference>
<dbReference type="RefSeq" id="NP_005561.1">
    <property type="nucleotide sequence ID" value="NM_005570.4"/>
</dbReference>
<dbReference type="PDB" id="3A4U">
    <property type="method" value="X-ray"/>
    <property type="resolution" value="1.84 A"/>
    <property type="chains" value="A=31-285"/>
</dbReference>
<dbReference type="PDB" id="3LCP">
    <property type="method" value="X-ray"/>
    <property type="resolution" value="2.45 A"/>
    <property type="chains" value="A/B=32-277"/>
</dbReference>
<dbReference type="PDB" id="3WHT">
    <property type="method" value="X-ray"/>
    <property type="resolution" value="1.80 A"/>
    <property type="chains" value="A=31-269"/>
</dbReference>
<dbReference type="PDB" id="3WHU">
    <property type="method" value="X-ray"/>
    <property type="resolution" value="2.60 A"/>
    <property type="chains" value="A=31-269"/>
</dbReference>
<dbReference type="PDB" id="3WNX">
    <property type="method" value="X-ray"/>
    <property type="resolution" value="2.75 A"/>
    <property type="chains" value="A=31-269"/>
</dbReference>
<dbReference type="PDB" id="4GKX">
    <property type="method" value="X-ray"/>
    <property type="resolution" value="2.70 A"/>
    <property type="chains" value="A/B/C/D/E/F=31-270"/>
</dbReference>
<dbReference type="PDB" id="4GKY">
    <property type="method" value="X-ray"/>
    <property type="resolution" value="2.42 A"/>
    <property type="chains" value="A=31-270"/>
</dbReference>
<dbReference type="PDB" id="4YGB">
    <property type="method" value="X-ray"/>
    <property type="resolution" value="1.60 A"/>
    <property type="chains" value="A/C=31-269"/>
</dbReference>
<dbReference type="PDB" id="4YGC">
    <property type="method" value="X-ray"/>
    <property type="resolution" value="2.40 A"/>
    <property type="chains" value="A/C/E/G=31-269"/>
</dbReference>
<dbReference type="PDB" id="4YGD">
    <property type="method" value="X-ray"/>
    <property type="resolution" value="2.51 A"/>
    <property type="chains" value="A/C/E/G=31-269"/>
</dbReference>
<dbReference type="PDB" id="4YGE">
    <property type="method" value="X-ray"/>
    <property type="resolution" value="3.05 A"/>
    <property type="chains" value="A/C/E=31-269"/>
</dbReference>
<dbReference type="PDB" id="8JP4">
    <property type="method" value="EM"/>
    <property type="resolution" value="2.53 A"/>
    <property type="chains" value="A/B/E/F=1-510"/>
</dbReference>
<dbReference type="PDB" id="8JP5">
    <property type="method" value="EM"/>
    <property type="resolution" value="2.59 A"/>
    <property type="chains" value="A/B/E/F=1-510"/>
</dbReference>
<dbReference type="PDB" id="8JP6">
    <property type="method" value="EM"/>
    <property type="resolution" value="3.29 A"/>
    <property type="chains" value="A/B/E/F=1-510"/>
</dbReference>
<dbReference type="PDB" id="8JP7">
    <property type="method" value="EM"/>
    <property type="resolution" value="3.51 A"/>
    <property type="chains" value="A/B/E/F=1-510"/>
</dbReference>
<dbReference type="PDB" id="8JP8">
    <property type="method" value="EM"/>
    <property type="resolution" value="3.39 A"/>
    <property type="chains" value="A/B/E/F=1-510"/>
</dbReference>
<dbReference type="PDB" id="8JP9">
    <property type="method" value="EM"/>
    <property type="resolution" value="3.37 A"/>
    <property type="chains" value="A/B/E/F=1-510"/>
</dbReference>
<dbReference type="PDB" id="8JPG">
    <property type="method" value="EM"/>
    <property type="resolution" value="6.76 A"/>
    <property type="chains" value="A/B/E/F=1-510"/>
</dbReference>
<dbReference type="PDBsum" id="3A4U"/>
<dbReference type="PDBsum" id="3LCP"/>
<dbReference type="PDBsum" id="3WHT"/>
<dbReference type="PDBsum" id="3WHU"/>
<dbReference type="PDBsum" id="3WNX"/>
<dbReference type="PDBsum" id="4GKX"/>
<dbReference type="PDBsum" id="4GKY"/>
<dbReference type="PDBsum" id="4YGB"/>
<dbReference type="PDBsum" id="4YGC"/>
<dbReference type="PDBsum" id="4YGD"/>
<dbReference type="PDBsum" id="4YGE"/>
<dbReference type="PDBsum" id="8JP4"/>
<dbReference type="PDBsum" id="8JP5"/>
<dbReference type="PDBsum" id="8JP6"/>
<dbReference type="PDBsum" id="8JP7"/>
<dbReference type="PDBsum" id="8JP8"/>
<dbReference type="PDBsum" id="8JP9"/>
<dbReference type="PDBsum" id="8JPG"/>
<dbReference type="EMDB" id="EMD-36467"/>
<dbReference type="EMDB" id="EMD-36468"/>
<dbReference type="EMDB" id="EMD-36469"/>
<dbReference type="EMDB" id="EMD-36470"/>
<dbReference type="EMDB" id="EMD-36471"/>
<dbReference type="EMDB" id="EMD-36472"/>
<dbReference type="EMDB" id="EMD-36479"/>
<dbReference type="SMR" id="P49257"/>
<dbReference type="BioGRID" id="110185">
    <property type="interactions" value="479"/>
</dbReference>
<dbReference type="ComplexPortal" id="CPX-8001">
    <property type="entry name" value="LMAN1-MCFD2 cargo receptor complex"/>
</dbReference>
<dbReference type="CORUM" id="P49257"/>
<dbReference type="DIP" id="DIP-42188N"/>
<dbReference type="ELM" id="P49257"/>
<dbReference type="FunCoup" id="P49257">
    <property type="interactions" value="1500"/>
</dbReference>
<dbReference type="IntAct" id="P49257">
    <property type="interactions" value="62"/>
</dbReference>
<dbReference type="MINT" id="P49257"/>
<dbReference type="STRING" id="9606.ENSP00000251047"/>
<dbReference type="DrugBank" id="DB00025">
    <property type="generic name" value="Antihemophilic factor, human recombinant"/>
</dbReference>
<dbReference type="DrugBank" id="DB13998">
    <property type="generic name" value="Lonoctocog alfa"/>
</dbReference>
<dbReference type="DrugBank" id="DB13999">
    <property type="generic name" value="Moroctocog alfa"/>
</dbReference>
<dbReference type="TCDB" id="9.B.417.1.1">
    <property type="family name" value="the mcfd2/lman1 complex receptor (mlm-cr) family"/>
</dbReference>
<dbReference type="UniLectin" id="P49257"/>
<dbReference type="GlyCosmos" id="P49257">
    <property type="glycosylation" value="3 sites, 4 glycans"/>
</dbReference>
<dbReference type="GlyGen" id="P49257">
    <property type="glycosylation" value="9 sites, 5 O-linked glycans (9 sites)"/>
</dbReference>
<dbReference type="iPTMnet" id="P49257"/>
<dbReference type="MetOSite" id="P49257"/>
<dbReference type="PhosphoSitePlus" id="P49257"/>
<dbReference type="SwissPalm" id="P49257"/>
<dbReference type="BioMuta" id="LMAN1"/>
<dbReference type="DMDM" id="22261801"/>
<dbReference type="jPOST" id="P49257"/>
<dbReference type="MassIVE" id="P49257"/>
<dbReference type="PaxDb" id="9606-ENSP00000251047"/>
<dbReference type="PeptideAtlas" id="P49257"/>
<dbReference type="ProteomicsDB" id="55977"/>
<dbReference type="Pumba" id="P49257"/>
<dbReference type="Antibodypedia" id="1115">
    <property type="antibodies" value="297 antibodies from 32 providers"/>
</dbReference>
<dbReference type="DNASU" id="3998"/>
<dbReference type="Ensembl" id="ENST00000251047.6">
    <property type="protein sequence ID" value="ENSP00000251047.4"/>
    <property type="gene ID" value="ENSG00000074695.6"/>
</dbReference>
<dbReference type="GeneID" id="3998"/>
<dbReference type="KEGG" id="hsa:3998"/>
<dbReference type="MANE-Select" id="ENST00000251047.6">
    <property type="protein sequence ID" value="ENSP00000251047.4"/>
    <property type="RefSeq nucleotide sequence ID" value="NM_005570.4"/>
    <property type="RefSeq protein sequence ID" value="NP_005561.1"/>
</dbReference>
<dbReference type="UCSC" id="uc002lhz.4">
    <property type="organism name" value="human"/>
</dbReference>
<dbReference type="AGR" id="HGNC:6631"/>
<dbReference type="CTD" id="3998"/>
<dbReference type="DisGeNET" id="3998"/>
<dbReference type="GeneCards" id="LMAN1"/>
<dbReference type="HGNC" id="HGNC:6631">
    <property type="gene designation" value="LMAN1"/>
</dbReference>
<dbReference type="HPA" id="ENSG00000074695">
    <property type="expression patterns" value="Low tissue specificity"/>
</dbReference>
<dbReference type="MalaCards" id="LMAN1"/>
<dbReference type="MIM" id="227300">
    <property type="type" value="phenotype"/>
</dbReference>
<dbReference type="MIM" id="601567">
    <property type="type" value="gene"/>
</dbReference>
<dbReference type="neXtProt" id="NX_P49257"/>
<dbReference type="OpenTargets" id="ENSG00000074695"/>
<dbReference type="Orphanet" id="35909">
    <property type="disease" value="Combined deficiency of factor V and factor VIII"/>
</dbReference>
<dbReference type="PharmGKB" id="PA30399"/>
<dbReference type="VEuPathDB" id="HostDB:ENSG00000074695"/>
<dbReference type="eggNOG" id="KOG3838">
    <property type="taxonomic scope" value="Eukaryota"/>
</dbReference>
<dbReference type="GeneTree" id="ENSGT00940000159146"/>
<dbReference type="HOGENOM" id="CLU_041093_4_0_1"/>
<dbReference type="InParanoid" id="P49257"/>
<dbReference type="OMA" id="WSAEFQF"/>
<dbReference type="OrthoDB" id="10265193at2759"/>
<dbReference type="PAN-GO" id="P49257">
    <property type="GO annotations" value="8 GO annotations based on evolutionary models"/>
</dbReference>
<dbReference type="PhylomeDB" id="P49257"/>
<dbReference type="TreeFam" id="TF313311"/>
<dbReference type="PathwayCommons" id="P49257"/>
<dbReference type="Reactome" id="R-HSA-204005">
    <property type="pathway name" value="COPII-mediated vesicle transport"/>
</dbReference>
<dbReference type="Reactome" id="R-HSA-5694530">
    <property type="pathway name" value="Cargo concentration in the ER"/>
</dbReference>
<dbReference type="Reactome" id="R-HSA-8980692">
    <property type="pathway name" value="RHOA GTPase cycle"/>
</dbReference>
<dbReference type="Reactome" id="R-HSA-9013106">
    <property type="pathway name" value="RHOC GTPase cycle"/>
</dbReference>
<dbReference type="Reactome" id="R-HSA-9013404">
    <property type="pathway name" value="RAC2 GTPase cycle"/>
</dbReference>
<dbReference type="Reactome" id="R-HSA-9013405">
    <property type="pathway name" value="RHOD GTPase cycle"/>
</dbReference>
<dbReference type="Reactome" id="R-HSA-9013408">
    <property type="pathway name" value="RHOG GTPase cycle"/>
</dbReference>
<dbReference type="Reactome" id="R-HSA-9013423">
    <property type="pathway name" value="RAC3 GTPase cycle"/>
</dbReference>
<dbReference type="Reactome" id="R-HSA-948021">
    <property type="pathway name" value="Transport to the Golgi and subsequent modification"/>
</dbReference>
<dbReference type="SignaLink" id="P49257"/>
<dbReference type="BioGRID-ORCS" id="3998">
    <property type="hits" value="9 hits in 1157 CRISPR screens"/>
</dbReference>
<dbReference type="ChiTaRS" id="LMAN1">
    <property type="organism name" value="human"/>
</dbReference>
<dbReference type="EvolutionaryTrace" id="P49257"/>
<dbReference type="GeneWiki" id="LMAN1"/>
<dbReference type="GenomeRNAi" id="3998"/>
<dbReference type="Pharos" id="P49257">
    <property type="development level" value="Tbio"/>
</dbReference>
<dbReference type="PRO" id="PR:P49257"/>
<dbReference type="Proteomes" id="UP000005640">
    <property type="component" value="Chromosome 18"/>
</dbReference>
<dbReference type="RNAct" id="P49257">
    <property type="molecule type" value="protein"/>
</dbReference>
<dbReference type="Bgee" id="ENSG00000074695">
    <property type="expression patterns" value="Expressed in germinal epithelium of ovary and 192 other cell types or tissues"/>
</dbReference>
<dbReference type="ExpressionAtlas" id="P49257">
    <property type="expression patterns" value="baseline and differential"/>
</dbReference>
<dbReference type="GO" id="GO:0062023">
    <property type="term" value="C:collagen-containing extracellular matrix"/>
    <property type="evidence" value="ECO:0007005"/>
    <property type="project" value="BHF-UCL"/>
</dbReference>
<dbReference type="GO" id="GO:0030134">
    <property type="term" value="C:COPII-coated ER to Golgi transport vesicle"/>
    <property type="evidence" value="ECO:0000318"/>
    <property type="project" value="GO_Central"/>
</dbReference>
<dbReference type="GO" id="GO:0005783">
    <property type="term" value="C:endoplasmic reticulum"/>
    <property type="evidence" value="ECO:0000314"/>
    <property type="project" value="UniProtKB"/>
</dbReference>
<dbReference type="GO" id="GO:0005789">
    <property type="term" value="C:endoplasmic reticulum membrane"/>
    <property type="evidence" value="ECO:0000318"/>
    <property type="project" value="GO_Central"/>
</dbReference>
<dbReference type="GO" id="GO:0005793">
    <property type="term" value="C:endoplasmic reticulum-Golgi intermediate compartment"/>
    <property type="evidence" value="ECO:0000314"/>
    <property type="project" value="UniProtKB"/>
</dbReference>
<dbReference type="GO" id="GO:0033116">
    <property type="term" value="C:endoplasmic reticulum-Golgi intermediate compartment membrane"/>
    <property type="evidence" value="ECO:0000304"/>
    <property type="project" value="Reactome"/>
</dbReference>
<dbReference type="GO" id="GO:0012507">
    <property type="term" value="C:ER to Golgi transport vesicle membrane"/>
    <property type="evidence" value="ECO:0000304"/>
    <property type="project" value="Reactome"/>
</dbReference>
<dbReference type="GO" id="GO:0070062">
    <property type="term" value="C:extracellular exosome"/>
    <property type="evidence" value="ECO:0007005"/>
    <property type="project" value="UniProtKB"/>
</dbReference>
<dbReference type="GO" id="GO:0000139">
    <property type="term" value="C:Golgi membrane"/>
    <property type="evidence" value="ECO:0000318"/>
    <property type="project" value="GO_Central"/>
</dbReference>
<dbReference type="GO" id="GO:0016020">
    <property type="term" value="C:membrane"/>
    <property type="evidence" value="ECO:0007005"/>
    <property type="project" value="UniProtKB"/>
</dbReference>
<dbReference type="GO" id="GO:0030017">
    <property type="term" value="C:sarcomere"/>
    <property type="evidence" value="ECO:0007669"/>
    <property type="project" value="Ensembl"/>
</dbReference>
<dbReference type="GO" id="GO:0005537">
    <property type="term" value="F:D-mannose binding"/>
    <property type="evidence" value="ECO:0000318"/>
    <property type="project" value="GO_Central"/>
</dbReference>
<dbReference type="GO" id="GO:0046872">
    <property type="term" value="F:metal ion binding"/>
    <property type="evidence" value="ECO:0000269"/>
    <property type="project" value="DisProt"/>
</dbReference>
<dbReference type="GO" id="GO:0051082">
    <property type="term" value="F:unfolded protein binding"/>
    <property type="evidence" value="ECO:0000304"/>
    <property type="project" value="ProtInc"/>
</dbReference>
<dbReference type="GO" id="GO:0007596">
    <property type="term" value="P:blood coagulation"/>
    <property type="evidence" value="ECO:0000304"/>
    <property type="project" value="ProtInc"/>
</dbReference>
<dbReference type="GO" id="GO:0007029">
    <property type="term" value="P:endoplasmic reticulum organization"/>
    <property type="evidence" value="ECO:0007669"/>
    <property type="project" value="Ensembl"/>
</dbReference>
<dbReference type="GO" id="GO:0006888">
    <property type="term" value="P:endoplasmic reticulum to Golgi vesicle-mediated transport"/>
    <property type="evidence" value="ECO:0000318"/>
    <property type="project" value="GO_Central"/>
</dbReference>
<dbReference type="GO" id="GO:0007030">
    <property type="term" value="P:Golgi organization"/>
    <property type="evidence" value="ECO:0000315"/>
    <property type="project" value="UniProtKB"/>
</dbReference>
<dbReference type="GO" id="GO:1903215">
    <property type="term" value="P:negative regulation of protein targeting to mitochondrion"/>
    <property type="evidence" value="ECO:0007001"/>
    <property type="project" value="ParkinsonsUK-UCL"/>
</dbReference>
<dbReference type="GO" id="GO:0010638">
    <property type="term" value="P:positive regulation of organelle organization"/>
    <property type="evidence" value="ECO:0000315"/>
    <property type="project" value="UniProtKB"/>
</dbReference>
<dbReference type="GO" id="GO:0006457">
    <property type="term" value="P:protein folding"/>
    <property type="evidence" value="ECO:0000304"/>
    <property type="project" value="ProtInc"/>
</dbReference>
<dbReference type="GO" id="GO:0015031">
    <property type="term" value="P:protein transport"/>
    <property type="evidence" value="ECO:0007669"/>
    <property type="project" value="UniProtKB-KW"/>
</dbReference>
<dbReference type="CDD" id="cd06902">
    <property type="entry name" value="lectin_ERGIC-53_ERGL"/>
    <property type="match status" value="1"/>
</dbReference>
<dbReference type="FunFam" id="2.60.120.200:FF:000028">
    <property type="entry name" value="Blast:Protein ERGIC-53"/>
    <property type="match status" value="1"/>
</dbReference>
<dbReference type="Gene3D" id="2.60.120.200">
    <property type="match status" value="1"/>
</dbReference>
<dbReference type="InterPro" id="IPR013320">
    <property type="entry name" value="ConA-like_dom_sf"/>
</dbReference>
<dbReference type="InterPro" id="IPR051136">
    <property type="entry name" value="Intracellular_Lectin-GPT"/>
</dbReference>
<dbReference type="InterPro" id="IPR005052">
    <property type="entry name" value="Lectin_leg"/>
</dbReference>
<dbReference type="PANTHER" id="PTHR12223:SF32">
    <property type="entry name" value="PROTEIN ERGIC-53"/>
    <property type="match status" value="1"/>
</dbReference>
<dbReference type="PANTHER" id="PTHR12223">
    <property type="entry name" value="VESICULAR MANNOSE-BINDING LECTIN"/>
    <property type="match status" value="1"/>
</dbReference>
<dbReference type="Pfam" id="PF03388">
    <property type="entry name" value="Lectin_leg-like"/>
    <property type="match status" value="1"/>
</dbReference>
<dbReference type="SUPFAM" id="SSF49899">
    <property type="entry name" value="Concanavalin A-like lectins/glucanases"/>
    <property type="match status" value="1"/>
</dbReference>
<dbReference type="PROSITE" id="PS51328">
    <property type="entry name" value="L_LECTIN_LIKE"/>
    <property type="match status" value="1"/>
</dbReference>
<comment type="function">
    <text evidence="6 7">Mannose-specific lectin. May recognize sugar residues of glycoproteins, glycolipids, or glycosylphosphatidyl inositol anchors and may be involved in the sorting or recycling of proteins, lipids, or both. The LMAN1-MCFD2 complex forms a specific cargo receptor for the ER-to-Golgi transport of selected proteins.</text>
</comment>
<comment type="subunit">
    <text evidence="6 7 9 10 11 12 13 14 15 16">Exists both as a covalent disulfide-linked homohexamer, and a complex of three disulfide-linked dimers non-covalently kept together. Interacts with MCFD2. May interact with TMEM115. Interacts with RAB3GAP1 and RAB3GAP2 (PubMed:22337587). Interacts with UBXN6 (PubMed:22337587). Interacts with SERPINA1/alpha1-antitrypsin (PubMed:31142615). Interacts with BET1 (PubMed:34779586).</text>
</comment>
<comment type="interaction">
    <interactant intactId="EBI-1057738">
        <id>P49257</id>
    </interactant>
    <interactant intactId="EBI-541644">
        <id>Q9BS26</id>
        <label>ERP44</label>
    </interactant>
    <organismsDiffer>false</organismsDiffer>
    <experiments>3</experiments>
</comment>
<comment type="interaction">
    <interactant intactId="EBI-1057738">
        <id>P49257</id>
    </interactant>
    <interactant intactId="EBI-2689785">
        <id>Q8NI22</id>
        <label>MCFD2</label>
    </interactant>
    <organismsDiffer>false</organismsDiffer>
    <experiments>15</experiments>
</comment>
<comment type="interaction">
    <interactant intactId="EBI-1057738">
        <id>P49257</id>
    </interactant>
    <interactant intactId="EBI-1044848">
        <id>O15260</id>
        <label>SURF4</label>
    </interactant>
    <organismsDiffer>false</organismsDiffer>
    <experiments>3</experiments>
</comment>
<comment type="subcellular location">
    <subcellularLocation>
        <location>Endoplasmic reticulum-Golgi intermediate compartment membrane</location>
        <topology>Single-pass type I membrane protein</topology>
    </subcellularLocation>
    <subcellularLocation>
        <location>Golgi apparatus membrane</location>
        <topology>Single-pass membrane protein</topology>
    </subcellularLocation>
    <subcellularLocation>
        <location>Endoplasmic reticulum membrane</location>
        <topology>Single-pass type I membrane protein</topology>
    </subcellularLocation>
</comment>
<comment type="tissue specificity">
    <text evidence="7">Ubiquitous.</text>
</comment>
<comment type="domain">
    <text>The FF ER export motif at the C-terminus is not sufficient to support endoplasmic reticulum exit, and needs assistance of Gln-501 for proper recognition of COPII coat components.</text>
</comment>
<comment type="PTM">
    <text>The N-terminal may be partly blocked.</text>
</comment>
<comment type="mass spectrometry"/>
<comment type="disease" evidence="3 10">
    <disease id="DI-01546">
        <name>Factor V and factor VIII combined deficiency 1</name>
        <acronym>F5F8D1</acronym>
        <description>A blood coagulation disorder characterized by bleeding symptoms similar to those in hemophilia or parahemophilia, that are caused by single deficiency of FV or FVIII, respectively. The most common symptoms are epistaxis, menorrhagia, and excessive bleeding during or after trauma. Plasma levels of coagulation factors V and VIII are in the range of 5 to 30% of normal.</description>
        <dbReference type="MIM" id="227300"/>
    </disease>
    <text>The disease is caused by variants affecting the gene represented in this entry.</text>
</comment>
<organism>
    <name type="scientific">Homo sapiens</name>
    <name type="common">Human</name>
    <dbReference type="NCBI Taxonomy" id="9606"/>
    <lineage>
        <taxon>Eukaryota</taxon>
        <taxon>Metazoa</taxon>
        <taxon>Chordata</taxon>
        <taxon>Craniata</taxon>
        <taxon>Vertebrata</taxon>
        <taxon>Euteleostomi</taxon>
        <taxon>Mammalia</taxon>
        <taxon>Eutheria</taxon>
        <taxon>Euarchontoglires</taxon>
        <taxon>Primates</taxon>
        <taxon>Haplorrhini</taxon>
        <taxon>Catarrhini</taxon>
        <taxon>Hominidae</taxon>
        <taxon>Homo</taxon>
    </lineage>
</organism>
<feature type="signal peptide" evidence="5 17 18 21">
    <location>
        <begin position="1"/>
        <end position="30"/>
    </location>
</feature>
<feature type="chain" id="PRO_0000017660" description="Protein ERGIC-53">
    <location>
        <begin position="31"/>
        <end position="510"/>
    </location>
</feature>
<feature type="topological domain" description="Lumenal" evidence="1">
    <location>
        <begin position="31"/>
        <end position="477"/>
    </location>
</feature>
<feature type="transmembrane region" description="Helical" evidence="1">
    <location>
        <begin position="478"/>
        <end position="498"/>
    </location>
</feature>
<feature type="topological domain" description="Cytoplasmic" evidence="1">
    <location>
        <begin position="499"/>
        <end position="510"/>
    </location>
</feature>
<feature type="domain" description="L-type lectin-like" evidence="2">
    <location>
        <begin position="44"/>
        <end position="267"/>
    </location>
</feature>
<feature type="region of interest" description="Mediates interaction with RAB3GAP1, RAB3GAP2 and UBXN6" evidence="13">
    <location>
        <begin position="499"/>
        <end position="510"/>
    </location>
</feature>
<feature type="short sequence motif" description="ER export motif">
    <location>
        <begin position="509"/>
        <end position="510"/>
    </location>
</feature>
<feature type="binding site" evidence="2">
    <location>
        <position position="88"/>
    </location>
    <ligand>
        <name>a carbohydrate</name>
        <dbReference type="ChEBI" id="CHEBI:16646"/>
    </ligand>
</feature>
<feature type="binding site" evidence="2">
    <location>
        <position position="121"/>
    </location>
    <ligand>
        <name>a carbohydrate</name>
        <dbReference type="ChEBI" id="CHEBI:16646"/>
    </ligand>
</feature>
<feature type="binding site">
    <location>
        <position position="152"/>
    </location>
    <ligand>
        <name>Ca(2+)</name>
        <dbReference type="ChEBI" id="CHEBI:29108"/>
    </ligand>
</feature>
<feature type="binding site">
    <location>
        <position position="154"/>
    </location>
    <ligand>
        <name>Ca(2+)</name>
        <dbReference type="ChEBI" id="CHEBI:29108"/>
    </ligand>
</feature>
<feature type="binding site" evidence="2">
    <location>
        <position position="156"/>
    </location>
    <ligand>
        <name>a carbohydrate</name>
        <dbReference type="ChEBI" id="CHEBI:16646"/>
    </ligand>
</feature>
<feature type="binding site">
    <location>
        <position position="156"/>
    </location>
    <ligand>
        <name>Ca(2+)</name>
        <dbReference type="ChEBI" id="CHEBI:29108"/>
    </ligand>
</feature>
<feature type="binding site" evidence="2">
    <location>
        <position position="178"/>
    </location>
    <ligand>
        <name>a carbohydrate</name>
        <dbReference type="ChEBI" id="CHEBI:16646"/>
    </ligand>
</feature>
<feature type="binding site">
    <location>
        <position position="181"/>
    </location>
    <ligand>
        <name>Ca(2+)</name>
        <dbReference type="ChEBI" id="CHEBI:29108"/>
    </ligand>
</feature>
<feature type="binding site" evidence="2">
    <location>
        <begin position="251"/>
        <end position="253"/>
    </location>
    <ligand>
        <name>a carbohydrate</name>
        <dbReference type="ChEBI" id="CHEBI:16646"/>
    </ligand>
</feature>
<feature type="site" description="Required for ER export">
    <location>
        <position position="501"/>
    </location>
</feature>
<feature type="modified residue" description="Phosphoserine" evidence="20">
    <location>
        <position position="425"/>
    </location>
</feature>
<feature type="disulfide bond">
    <location>
        <begin position="190"/>
        <end position="230"/>
    </location>
</feature>
<feature type="disulfide bond" description="Interchain">
    <location>
        <position position="466"/>
    </location>
</feature>
<feature type="disulfide bond" description="Interchain">
    <location>
        <position position="475"/>
    </location>
</feature>
<feature type="sequence variant" id="VAR_013703" description="In dbSNP:rs1043302." evidence="3">
    <original>R</original>
    <variation>Q</variation>
    <location>
        <position position="14"/>
    </location>
</feature>
<feature type="sequence variant" id="VAR_013704" description="In dbSNP:rs33926449." evidence="3">
    <original>V</original>
    <variation>A</variation>
    <location>
        <position position="39"/>
    </location>
</feature>
<feature type="sequence variant" id="VAR_071969" description="In F5F8D1; loss of interaction with MCFD2 and ability to bind D-mannose." evidence="10">
    <original>W</original>
    <variation>S</variation>
    <location>
        <position position="67"/>
    </location>
</feature>
<feature type="sequence variant" id="VAR_049770" description="In dbSNP:rs3737392.">
    <original>I</original>
    <variation>T</variation>
    <location>
        <position position="355"/>
    </location>
</feature>
<feature type="sequence variant" id="VAR_013705" description="In dbSNP:rs2298711." evidence="3 8">
    <original>M</original>
    <variation>L</variation>
    <location>
        <position position="410"/>
    </location>
</feature>
<feature type="sequence conflict" description="In Ref. 1; CAA50653." evidence="19" ref="1">
    <original>S</original>
    <variation>T</variation>
    <location>
        <position position="153"/>
    </location>
</feature>
<feature type="strand" evidence="26">
    <location>
        <begin position="43"/>
        <end position="46"/>
    </location>
</feature>
<feature type="helix" evidence="26">
    <location>
        <begin position="48"/>
        <end position="50"/>
    </location>
</feature>
<feature type="strand" evidence="26">
    <location>
        <begin position="52"/>
        <end position="56"/>
    </location>
</feature>
<feature type="strand" evidence="27">
    <location>
        <begin position="60"/>
        <end position="63"/>
    </location>
</feature>
<feature type="strand" evidence="26">
    <location>
        <begin position="67"/>
        <end position="71"/>
    </location>
</feature>
<feature type="strand" evidence="26">
    <location>
        <begin position="80"/>
        <end position="83"/>
    </location>
</feature>
<feature type="strand" evidence="24">
    <location>
        <begin position="85"/>
        <end position="88"/>
    </location>
</feature>
<feature type="strand" evidence="26">
    <location>
        <begin position="90"/>
        <end position="97"/>
    </location>
</feature>
<feature type="strand" evidence="26">
    <location>
        <begin position="102"/>
        <end position="113"/>
    </location>
</feature>
<feature type="strand" evidence="26">
    <location>
        <begin position="115"/>
        <end position="118"/>
    </location>
</feature>
<feature type="strand" evidence="26">
    <location>
        <begin position="122"/>
        <end position="128"/>
    </location>
</feature>
<feature type="strand" evidence="22">
    <location>
        <begin position="134"/>
        <end position="137"/>
    </location>
</feature>
<feature type="strand" evidence="26">
    <location>
        <begin position="146"/>
        <end position="152"/>
    </location>
</feature>
<feature type="strand" evidence="25">
    <location>
        <begin position="158"/>
        <end position="160"/>
    </location>
</feature>
<feature type="strand" evidence="26">
    <location>
        <begin position="164"/>
        <end position="170"/>
    </location>
</feature>
<feature type="helix" evidence="22">
    <location>
        <begin position="178"/>
        <end position="180"/>
    </location>
</feature>
<feature type="helix" evidence="22">
    <location>
        <begin position="183"/>
        <end position="185"/>
    </location>
</feature>
<feature type="strand" evidence="26">
    <location>
        <begin position="186"/>
        <end position="191"/>
    </location>
</feature>
<feature type="strand" evidence="26">
    <location>
        <begin position="201"/>
        <end position="208"/>
    </location>
</feature>
<feature type="strand" evidence="26">
    <location>
        <begin position="211"/>
        <end position="217"/>
    </location>
</feature>
<feature type="strand" evidence="23">
    <location>
        <begin position="219"/>
        <end position="222"/>
    </location>
</feature>
<feature type="strand" evidence="26">
    <location>
        <begin position="228"/>
        <end position="235"/>
    </location>
</feature>
<feature type="strand" evidence="26">
    <location>
        <begin position="240"/>
        <end position="249"/>
    </location>
</feature>
<feature type="strand" evidence="25">
    <location>
        <begin position="251"/>
        <end position="253"/>
    </location>
</feature>
<feature type="strand" evidence="26">
    <location>
        <begin position="256"/>
        <end position="268"/>
    </location>
</feature>
<feature type="turn" evidence="28">
    <location>
        <begin position="270"/>
        <end position="272"/>
    </location>
</feature>
<feature type="helix" evidence="29">
    <location>
        <begin position="277"/>
        <end position="279"/>
    </location>
</feature>
<feature type="helix" evidence="27">
    <location>
        <begin position="283"/>
        <end position="308"/>
    </location>
</feature>
<feature type="turn" evidence="27">
    <location>
        <begin position="320"/>
        <end position="322"/>
    </location>
</feature>
<feature type="helix" evidence="27">
    <location>
        <begin position="326"/>
        <end position="366"/>
    </location>
</feature>
<protein>
    <recommendedName>
        <fullName>Protein ERGIC-53</fullName>
    </recommendedName>
    <alternativeName>
        <fullName>ER-Golgi intermediate compartment 53 kDa protein</fullName>
    </alternativeName>
    <alternativeName>
        <fullName>Gp58</fullName>
    </alternativeName>
    <alternativeName>
        <fullName>Intracellular mannose-specific lectin MR60</fullName>
    </alternativeName>
    <alternativeName>
        <fullName>Lectin mannose-binding 1</fullName>
    </alternativeName>
</protein>
<name>LMAN1_HUMAN</name>
<reference key="1">
    <citation type="journal article" date="1993" name="Eur. J. Cell Biol.">
        <title>ERGIC-53, a membrane protein of the ER-Golgi intermediate compartment, carries an ER retention motif.</title>
        <authorList>
            <person name="Schindler R."/>
            <person name="Itin C."/>
            <person name="Zerial M."/>
            <person name="Lottspeich F."/>
            <person name="Hauri H.-P."/>
        </authorList>
    </citation>
    <scope>NUCLEOTIDE SEQUENCE [MRNA]</scope>
    <scope>PROTEIN SEQUENCE OF 31-59 AND 418-432</scope>
    <source>
        <tissue>Liver</tissue>
        <tissue>Placenta</tissue>
    </source>
</reference>
<reference key="2">
    <citation type="journal article" date="1995" name="J. Biol. Chem.">
        <title>ERGIC-53, a membrane protein of the endoplasmic reticulum-Golgi intermediate compartment, is identical to MR60, an intracellular mannose-specific lectin of myelomonocytic cells.</title>
        <authorList>
            <person name="Arar C."/>
            <person name="Carpentier V."/>
            <person name="Le Caer J.-P."/>
            <person name="Monsigny M."/>
            <person name="Legrand A."/>
            <person name="Roche A.-C."/>
        </authorList>
    </citation>
    <scope>NUCLEOTIDE SEQUENCE [MRNA]</scope>
    <scope>PROTEIN SEQUENCE OF 31-41</scope>
    <source>
        <tissue>Peripheral blood</tissue>
    </source>
</reference>
<reference key="3">
    <citation type="journal article" date="1999" name="Blood">
        <title>ERGIC-53 gene structure and mutation analysis in 19 combined factors V and VIII deficiency families.</title>
        <authorList>
            <person name="Nichols W.C."/>
            <person name="Terry V.H."/>
            <person name="Wheatley M.A."/>
            <person name="Yang A."/>
            <person name="Zivelin A."/>
            <person name="Ciavarella N."/>
            <person name="Stefanile C."/>
            <person name="Matsushita T."/>
            <person name="Saito H."/>
            <person name="de Bosch N.B."/>
            <person name="Ruiz-Saez A."/>
            <person name="Torres A."/>
            <person name="Thompson A.R."/>
            <person name="Feinstein D.I."/>
            <person name="White G.C."/>
            <person name="Negrier C."/>
            <person name="Vinciguerra C."/>
            <person name="Aktan M."/>
            <person name="Kaufman R.J."/>
            <person name="Ginsburg D."/>
            <person name="Seligsohn U."/>
        </authorList>
    </citation>
    <scope>NUCLEOTIDE SEQUENCE [GENOMIC DNA]</scope>
    <scope>VARIANTS GLN-14; ALA-39 AND LEU-410</scope>
    <scope>INVOLVEMENT IN F5F8D1</scope>
</reference>
<reference key="4">
    <citation type="journal article" date="2004" name="Genome Res.">
        <title>The status, quality, and expansion of the NIH full-length cDNA project: the Mammalian Gene Collection (MGC).</title>
        <authorList>
            <consortium name="The MGC Project Team"/>
        </authorList>
    </citation>
    <scope>NUCLEOTIDE SEQUENCE [LARGE SCALE MRNA]</scope>
    <scope>VARIANT LEU-410</scope>
    <source>
        <tissue>Brain</tissue>
    </source>
</reference>
<reference key="5">
    <citation type="journal article" date="2003" name="Nat. Biotechnol.">
        <title>Exploring proteomes and analyzing protein processing by mass spectrometric identification of sorted N-terminal peptides.</title>
        <authorList>
            <person name="Gevaert K."/>
            <person name="Goethals M."/>
            <person name="Martens L."/>
            <person name="Van Damme J."/>
            <person name="Staes A."/>
            <person name="Thomas G.R."/>
            <person name="Vandekerckhove J."/>
        </authorList>
    </citation>
    <scope>PROTEIN SEQUENCE OF 31-44</scope>
    <source>
        <tissue>Platelet</tissue>
    </source>
</reference>
<reference key="6">
    <citation type="journal article" date="1994" name="Cell">
        <title>A putative novel class of animal lectins in the secretory pathway homologous to leguminous lectins.</title>
        <authorList>
            <person name="Fiedler K."/>
            <person name="Simons K."/>
        </authorList>
    </citation>
    <scope>SIMILARITY TO LEGUMINOUS LECTINS</scope>
</reference>
<reference key="7">
    <citation type="journal article" date="2002" name="Proteomics">
        <title>Cluster analysis of an extensive human breast cancer cell line protein expression map database.</title>
        <authorList>
            <person name="Harris R.A."/>
            <person name="Yang A."/>
            <person name="Stein R.C."/>
            <person name="Lucy K."/>
            <person name="Brusten L."/>
            <person name="Herath A."/>
            <person name="Parekh R."/>
            <person name="Waterfield M.D."/>
            <person name="O'Hare M.J."/>
            <person name="Neville M.A."/>
            <person name="Page M.J."/>
            <person name="Zvelebil M.J."/>
        </authorList>
    </citation>
    <scope>MASS SPECTROMETRY</scope>
    <source>
        <tissue>Mammary cancer</tissue>
    </source>
</reference>
<reference key="8">
    <citation type="journal article" date="2003" name="J. Cell Sci.">
        <title>ER export of ERGIC-53 is controlled by cooperation of targeting determinants in all three of its domains.</title>
        <authorList>
            <person name="Nufer O."/>
            <person name="Kappeler F."/>
            <person name="Guldbrandsen S."/>
            <person name="Hauri H.-P."/>
        </authorList>
    </citation>
    <scope>FUNCTION</scope>
    <scope>TISSUE SPECIFICITY</scope>
    <scope>SUBCELLULAR LOCATION</scope>
    <scope>MOTIF ER EXPORT</scope>
    <scope>DISULFIDE BOND</scope>
</reference>
<reference key="9">
    <citation type="journal article" date="2003" name="Nat. Genet.">
        <title>Bleeding due to disruption of a cargo-specific ER-to-Golgi transport complex.</title>
        <authorList>
            <person name="Zhang B."/>
            <person name="Cunningham M.A."/>
            <person name="Nichols W.C."/>
            <person name="Bernat J.A."/>
            <person name="Seligsohn U."/>
            <person name="Pipe S.W."/>
            <person name="McVey J.H."/>
            <person name="Schulte-Overberg U."/>
            <person name="de Bosch N.B."/>
            <person name="Ruiz-Saez A."/>
            <person name="White G.C."/>
            <person name="Tuddenham E.G."/>
            <person name="Kaufman R.J."/>
            <person name="Ginsburg D."/>
        </authorList>
    </citation>
    <scope>INTERACTION WITH MCFD2</scope>
    <scope>FUNCTION</scope>
</reference>
<reference key="10">
    <citation type="journal article" date="2005" name="J. Mol. Biol.">
        <title>Oligomerization and intracellular localization of the glycoprotein receptor ERGIC-53 is independent of disulfide bonds.</title>
        <authorList>
            <person name="Neve E.P."/>
            <person name="Lahtinen U."/>
            <person name="Pettersson R.F."/>
        </authorList>
    </citation>
    <scope>SUBCELLULAR LOCATION</scope>
    <scope>SUBUNIT</scope>
    <scope>INTERCHAIN DISULFIDE BONDS</scope>
</reference>
<reference key="11">
    <citation type="journal article" date="2011" name="BMC Syst. Biol.">
        <title>Initial characterization of the human central proteome.</title>
        <authorList>
            <person name="Burkard T.R."/>
            <person name="Planyavsky M."/>
            <person name="Kaupe I."/>
            <person name="Breitwieser F.P."/>
            <person name="Buerckstuemmer T."/>
            <person name="Bennett K.L."/>
            <person name="Superti-Furga G."/>
            <person name="Colinge J."/>
        </authorList>
    </citation>
    <scope>IDENTIFICATION BY MASS SPECTROMETRY [LARGE SCALE ANALYSIS]</scope>
</reference>
<reference key="12">
    <citation type="journal article" date="2012" name="Mol. Cell. Proteomics">
        <title>Protein interaction profiling of the p97 adaptor UBXD1 points to a role for the complex in modulating ERGIC-53 trafficking.</title>
        <authorList>
            <person name="Haines D.S."/>
            <person name="Lee J.E."/>
            <person name="Beauparlant S.L."/>
            <person name="Kyle D.B."/>
            <person name="den Besten W."/>
            <person name="Sweredoski M.J."/>
            <person name="Graham R.L."/>
            <person name="Hess S."/>
            <person name="Deshaies R.J."/>
        </authorList>
    </citation>
    <scope>INTERACTION WITH RAB3GAP1; RAB3GAP2 AND UBXN6</scope>
    <scope>REGION</scope>
</reference>
<reference key="13">
    <citation type="journal article" date="2014" name="J. Cell Sci.">
        <title>TMEM115 is an integral membrane protein of the Golgi complex involved in retrograde transport.</title>
        <authorList>
            <person name="Ong Y.S."/>
            <person name="Tran T.H."/>
            <person name="Gounko N.V."/>
            <person name="Hong W."/>
        </authorList>
    </citation>
    <scope>INTERACTION WITH TMEM115</scope>
</reference>
<reference key="14">
    <citation type="journal article" date="2014" name="J. Proteomics">
        <title>An enzyme assisted RP-RPLC approach for in-depth analysis of human liver phosphoproteome.</title>
        <authorList>
            <person name="Bian Y."/>
            <person name="Song C."/>
            <person name="Cheng K."/>
            <person name="Dong M."/>
            <person name="Wang F."/>
            <person name="Huang J."/>
            <person name="Sun D."/>
            <person name="Wang L."/>
            <person name="Ye M."/>
            <person name="Zou H."/>
        </authorList>
    </citation>
    <scope>PHOSPHORYLATION [LARGE SCALE ANALYSIS] AT SER-425</scope>
    <scope>IDENTIFICATION BY MASS SPECTROMETRY [LARGE SCALE ANALYSIS]</scope>
    <source>
        <tissue>Liver</tissue>
    </source>
</reference>
<reference key="15">
    <citation type="journal article" date="2015" name="Proteomics">
        <title>N-terminome analysis of the human mitochondrial proteome.</title>
        <authorList>
            <person name="Vaca Jacome A.S."/>
            <person name="Rabilloud T."/>
            <person name="Schaeffer-Reiss C."/>
            <person name="Rompais M."/>
            <person name="Ayoub D."/>
            <person name="Lane L."/>
            <person name="Bairoch A."/>
            <person name="Van Dorsselaer A."/>
            <person name="Carapito C."/>
        </authorList>
    </citation>
    <scope>CLEAVAGE OF SIGNAL PEPTIDE [LARGE SCALE ANALYSIS] AFTER GLY-30</scope>
    <scope>IDENTIFICATION BY MASS SPECTROMETRY [LARGE SCALE ANALYSIS]</scope>
</reference>
<reference key="16">
    <citation type="journal article" date="2019" name="J. Biol. Chem.">
        <title>The E3 ubiquitin ligase MARCH2 regulates ERGIC3-dependent trafficking of secretory proteins.</title>
        <authorList>
            <person name="Yoo W."/>
            <person name="Cho E.B."/>
            <person name="Kim S."/>
            <person name="Yoon J.B."/>
        </authorList>
    </citation>
    <scope>INTERACTION WITH SERPINA1</scope>
</reference>
<reference key="17">
    <citation type="journal article" date="2021" name="EMBO Mol. Med.">
        <title>BET1 variants establish impaired vesicular transport as a cause for muscular dystrophy with epilepsy.</title>
        <authorList>
            <person name="Donkervoort S."/>
            <person name="Krause N."/>
            <person name="Dergai M."/>
            <person name="Yun P."/>
            <person name="Koliwer J."/>
            <person name="Gorokhova S."/>
            <person name="Geist Hauserman J."/>
            <person name="Cummings B.B."/>
            <person name="Hu Y."/>
            <person name="Smith R."/>
            <person name="Uapinyoying P."/>
            <person name="Ganesh V.S."/>
            <person name="Ghosh P.S."/>
            <person name="Monaghan K.G."/>
            <person name="Edassery S.L."/>
            <person name="Ferle P.E."/>
            <person name="Silverstein S."/>
            <person name="Chao K.R."/>
            <person name="Snyder M."/>
            <person name="Ellingwood S."/>
            <person name="Bharucha-Goebel D."/>
            <person name="Iannaccone S.T."/>
            <person name="Dal Peraro M."/>
            <person name="Foley A.R."/>
            <person name="Savas J.N."/>
            <person name="Bolduc V."/>
            <person name="Fasshauer D."/>
            <person name="Boennemann C.G."/>
            <person name="Schwake M."/>
        </authorList>
    </citation>
    <scope>INTERACTION WITH BET1</scope>
</reference>
<reference key="18">
    <citation type="journal article" date="2010" name="FEBS Lett.">
        <title>Crystal structure of the LMAN1-CRD/MCFD2 transport receptor complex provides insight into combined deficiency of factor V and factor VIII.</title>
        <authorList>
            <person name="Wigren E."/>
            <person name="Bourhis J.M."/>
            <person name="Kursula I."/>
            <person name="Guy J.E."/>
            <person name="Lindqvist Y."/>
        </authorList>
    </citation>
    <scope>X-RAY CRYSTALLOGRAPHY (2.45 ANGSTROMS) OF 32-277 IN COMPLEX WITH MCFD2 AND CALCIUM IONS</scope>
    <scope>SUBUNIT</scope>
    <scope>DISULFIDE BOND</scope>
</reference>
<reference key="19">
    <citation type="journal article" date="2010" name="Proc. Natl. Acad. Sci. U.S.A.">
        <title>Structural basis for the cooperative interplay between the two causative gene products of combined factor V and factor VIII deficiency.</title>
        <authorList>
            <person name="Nishio M."/>
            <person name="Kamiya Y."/>
            <person name="Mizushima T."/>
            <person name="Wakatsuki S."/>
            <person name="Sasakawa H."/>
            <person name="Yamamoto K."/>
            <person name="Uchiyama S."/>
            <person name="Noda M."/>
            <person name="McKay A.R."/>
            <person name="Fukui K."/>
            <person name="Hauri H.P."/>
            <person name="Kato K."/>
        </authorList>
    </citation>
    <scope>X-RAY CRYSTALLOGRAPHY (1.84 ANGSTROMS) OF 31-285 IN COMPLEX WITH CALCIUM IONS</scope>
    <scope>SUBUNIT</scope>
    <scope>DISULFIDE BOND</scope>
</reference>
<reference key="20">
    <citation type="journal article" date="2009" name="Am. J. Hematol.">
        <title>A novel missense mutation causing abnormal LMAN1 in a Japanese patient with combined deficiency of factor V and factor VIII.</title>
        <authorList>
            <person name="Yamada T."/>
            <person name="Fujimori Y."/>
            <person name="Suzuki A."/>
            <person name="Miyawaki Y."/>
            <person name="Takagi A."/>
            <person name="Murate T."/>
            <person name="Sano M."/>
            <person name="Matsushita T."/>
            <person name="Saito H."/>
            <person name="Kojima T."/>
        </authorList>
    </citation>
    <scope>VARIANT F5F8D1 SER-67</scope>
    <scope>CHARACTERIZATION OF VARIANT F5F8D1 SER-67</scope>
    <scope>INTERACTION WITH MCFD2</scope>
</reference>